<keyword id="KW-0963">Cytoplasm</keyword>
<keyword id="KW-1185">Reference proteome</keyword>
<keyword id="KW-0694">RNA-binding</keyword>
<name>SSRP_SYNJB</name>
<reference key="1">
    <citation type="journal article" date="2007" name="ISME J.">
        <title>Population level functional diversity in a microbial community revealed by comparative genomic and metagenomic analyses.</title>
        <authorList>
            <person name="Bhaya D."/>
            <person name="Grossman A.R."/>
            <person name="Steunou A.-S."/>
            <person name="Khuri N."/>
            <person name="Cohan F.M."/>
            <person name="Hamamura N."/>
            <person name="Melendrez M.C."/>
            <person name="Bateson M.M."/>
            <person name="Ward D.M."/>
            <person name="Heidelberg J.F."/>
        </authorList>
    </citation>
    <scope>NUCLEOTIDE SEQUENCE [LARGE SCALE GENOMIC DNA]</scope>
    <source>
        <strain>JA-2-3B'a(2-13)</strain>
    </source>
</reference>
<comment type="function">
    <text evidence="1">Required for rescue of stalled ribosomes mediated by trans-translation. Binds to transfer-messenger RNA (tmRNA), required for stable association of tmRNA with ribosomes. tmRNA and SmpB together mimic tRNA shape, replacing the anticodon stem-loop with SmpB. tmRNA is encoded by the ssrA gene; the 2 termini fold to resemble tRNA(Ala) and it encodes a 'tag peptide', a short internal open reading frame. During trans-translation Ala-aminoacylated tmRNA acts like a tRNA, entering the A-site of stalled ribosomes, displacing the stalled mRNA. The ribosome then switches to translate the ORF on the tmRNA; the nascent peptide is terminated with the 'tag peptide' encoded by the tmRNA and targeted for degradation. The ribosome is freed to recommence translation, which seems to be the essential function of trans-translation.</text>
</comment>
<comment type="subcellular location">
    <subcellularLocation>
        <location evidence="1">Cytoplasm</location>
    </subcellularLocation>
    <text evidence="1">The tmRNA-SmpB complex associates with stalled 70S ribosomes.</text>
</comment>
<comment type="similarity">
    <text evidence="1">Belongs to the SmpB family.</text>
</comment>
<evidence type="ECO:0000255" key="1">
    <source>
        <dbReference type="HAMAP-Rule" id="MF_00023"/>
    </source>
</evidence>
<evidence type="ECO:0000256" key="2">
    <source>
        <dbReference type="SAM" id="MobiDB-lite"/>
    </source>
</evidence>
<proteinExistence type="inferred from homology"/>
<dbReference type="EMBL" id="CP000240">
    <property type="protein sequence ID" value="ABD02239.1"/>
    <property type="molecule type" value="Genomic_DNA"/>
</dbReference>
<dbReference type="RefSeq" id="WP_011432891.1">
    <property type="nucleotide sequence ID" value="NC_007776.1"/>
</dbReference>
<dbReference type="SMR" id="Q2JM08"/>
<dbReference type="STRING" id="321332.CYB_1264"/>
<dbReference type="KEGG" id="cyb:CYB_1264"/>
<dbReference type="eggNOG" id="COG0691">
    <property type="taxonomic scope" value="Bacteria"/>
</dbReference>
<dbReference type="HOGENOM" id="CLU_108953_0_1_3"/>
<dbReference type="OrthoDB" id="9805462at2"/>
<dbReference type="Proteomes" id="UP000001938">
    <property type="component" value="Chromosome"/>
</dbReference>
<dbReference type="GO" id="GO:0005829">
    <property type="term" value="C:cytosol"/>
    <property type="evidence" value="ECO:0007669"/>
    <property type="project" value="TreeGrafter"/>
</dbReference>
<dbReference type="GO" id="GO:0003723">
    <property type="term" value="F:RNA binding"/>
    <property type="evidence" value="ECO:0007669"/>
    <property type="project" value="UniProtKB-UniRule"/>
</dbReference>
<dbReference type="GO" id="GO:0070929">
    <property type="term" value="P:trans-translation"/>
    <property type="evidence" value="ECO:0007669"/>
    <property type="project" value="UniProtKB-UniRule"/>
</dbReference>
<dbReference type="CDD" id="cd09294">
    <property type="entry name" value="SmpB"/>
    <property type="match status" value="1"/>
</dbReference>
<dbReference type="Gene3D" id="2.40.280.10">
    <property type="match status" value="1"/>
</dbReference>
<dbReference type="HAMAP" id="MF_00023">
    <property type="entry name" value="SmpB"/>
    <property type="match status" value="1"/>
</dbReference>
<dbReference type="InterPro" id="IPR023620">
    <property type="entry name" value="SmpB"/>
</dbReference>
<dbReference type="InterPro" id="IPR000037">
    <property type="entry name" value="SsrA-bd_prot"/>
</dbReference>
<dbReference type="InterPro" id="IPR020081">
    <property type="entry name" value="SsrA-bd_prot_CS"/>
</dbReference>
<dbReference type="NCBIfam" id="NF003843">
    <property type="entry name" value="PRK05422.1"/>
    <property type="match status" value="1"/>
</dbReference>
<dbReference type="NCBIfam" id="TIGR00086">
    <property type="entry name" value="smpB"/>
    <property type="match status" value="1"/>
</dbReference>
<dbReference type="PANTHER" id="PTHR30308:SF2">
    <property type="entry name" value="SSRA-BINDING PROTEIN"/>
    <property type="match status" value="1"/>
</dbReference>
<dbReference type="PANTHER" id="PTHR30308">
    <property type="entry name" value="TMRNA-BINDING COMPONENT OF TRANS-TRANSLATION TAGGING COMPLEX"/>
    <property type="match status" value="1"/>
</dbReference>
<dbReference type="Pfam" id="PF01668">
    <property type="entry name" value="SmpB"/>
    <property type="match status" value="1"/>
</dbReference>
<dbReference type="SUPFAM" id="SSF74982">
    <property type="entry name" value="Small protein B (SmpB)"/>
    <property type="match status" value="1"/>
</dbReference>
<dbReference type="PROSITE" id="PS01317">
    <property type="entry name" value="SSRP"/>
    <property type="match status" value="1"/>
</dbReference>
<organism>
    <name type="scientific">Synechococcus sp. (strain JA-2-3B'a(2-13))</name>
    <name type="common">Cyanobacteria bacterium Yellowstone B-Prime</name>
    <dbReference type="NCBI Taxonomy" id="321332"/>
    <lineage>
        <taxon>Bacteria</taxon>
        <taxon>Bacillati</taxon>
        <taxon>Cyanobacteriota</taxon>
        <taxon>Cyanophyceae</taxon>
        <taxon>Synechococcales</taxon>
        <taxon>Synechococcaceae</taxon>
        <taxon>Synechococcus</taxon>
    </lineage>
</organism>
<feature type="chain" id="PRO_1000002175" description="SsrA-binding protein">
    <location>
        <begin position="1"/>
        <end position="154"/>
    </location>
</feature>
<feature type="region of interest" description="Disordered" evidence="2">
    <location>
        <begin position="134"/>
        <end position="154"/>
    </location>
</feature>
<accession>Q2JM08</accession>
<sequence length="154" mass="17940">MAVDPNVKTLVDNRRARFEYDILETYEAGIQLTGTEVKSIRAGKANLQDAFALFRDGEAWLHNLHISPHDTASKVFNHDPTRRRKLLLHRREIDRLRGLVEQKGLTVVPLKLVLNRGWIKAHLGVARGKKLHDKRQAIKERQTQREIQRELKER</sequence>
<gene>
    <name evidence="1" type="primary">smpB</name>
    <name type="ordered locus">CYB_1264</name>
</gene>
<protein>
    <recommendedName>
        <fullName evidence="1">SsrA-binding protein</fullName>
    </recommendedName>
    <alternativeName>
        <fullName evidence="1">Small protein B</fullName>
    </alternativeName>
</protein>